<gene>
    <name evidence="1" type="primary">fmt</name>
    <name type="ordered locus">VFMJ11_2675</name>
</gene>
<evidence type="ECO:0000255" key="1">
    <source>
        <dbReference type="HAMAP-Rule" id="MF_00182"/>
    </source>
</evidence>
<proteinExistence type="inferred from homology"/>
<accession>B5FCW7</accession>
<feature type="chain" id="PRO_1000098459" description="Methionyl-tRNA formyltransferase">
    <location>
        <begin position="1"/>
        <end position="315"/>
    </location>
</feature>
<feature type="binding site" evidence="1">
    <location>
        <begin position="113"/>
        <end position="116"/>
    </location>
    <ligand>
        <name>(6S)-5,6,7,8-tetrahydrofolate</name>
        <dbReference type="ChEBI" id="CHEBI:57453"/>
    </ligand>
</feature>
<reference key="1">
    <citation type="submission" date="2008-08" db="EMBL/GenBank/DDBJ databases">
        <title>Complete sequence of Vibrio fischeri strain MJ11.</title>
        <authorList>
            <person name="Mandel M.J."/>
            <person name="Stabb E.V."/>
            <person name="Ruby E.G."/>
            <person name="Ferriera S."/>
            <person name="Johnson J."/>
            <person name="Kravitz S."/>
            <person name="Beeson K."/>
            <person name="Sutton G."/>
            <person name="Rogers Y.-H."/>
            <person name="Friedman R."/>
            <person name="Frazier M."/>
            <person name="Venter J.C."/>
        </authorList>
    </citation>
    <scope>NUCLEOTIDE SEQUENCE [LARGE SCALE GENOMIC DNA]</scope>
    <source>
        <strain>MJ11</strain>
    </source>
</reference>
<keyword id="KW-0648">Protein biosynthesis</keyword>
<keyword id="KW-0808">Transferase</keyword>
<dbReference type="EC" id="2.1.2.9" evidence="1"/>
<dbReference type="EMBL" id="CP001139">
    <property type="protein sequence ID" value="ACH65083.1"/>
    <property type="molecule type" value="Genomic_DNA"/>
</dbReference>
<dbReference type="RefSeq" id="WP_012532813.1">
    <property type="nucleotide sequence ID" value="NC_011184.1"/>
</dbReference>
<dbReference type="SMR" id="B5FCW7"/>
<dbReference type="KEGG" id="vfm:VFMJ11_2675"/>
<dbReference type="HOGENOM" id="CLU_033347_1_2_6"/>
<dbReference type="Proteomes" id="UP000001857">
    <property type="component" value="Chromosome I"/>
</dbReference>
<dbReference type="GO" id="GO:0005829">
    <property type="term" value="C:cytosol"/>
    <property type="evidence" value="ECO:0007669"/>
    <property type="project" value="TreeGrafter"/>
</dbReference>
<dbReference type="GO" id="GO:0004479">
    <property type="term" value="F:methionyl-tRNA formyltransferase activity"/>
    <property type="evidence" value="ECO:0007669"/>
    <property type="project" value="UniProtKB-UniRule"/>
</dbReference>
<dbReference type="CDD" id="cd08646">
    <property type="entry name" value="FMT_core_Met-tRNA-FMT_N"/>
    <property type="match status" value="1"/>
</dbReference>
<dbReference type="CDD" id="cd08704">
    <property type="entry name" value="Met_tRNA_FMT_C"/>
    <property type="match status" value="1"/>
</dbReference>
<dbReference type="FunFam" id="3.40.50.12230:FF:000001">
    <property type="entry name" value="Methionyl-tRNA formyltransferase"/>
    <property type="match status" value="1"/>
</dbReference>
<dbReference type="FunFam" id="3.40.50.170:FF:000003">
    <property type="entry name" value="Methionyl-tRNA formyltransferase"/>
    <property type="match status" value="1"/>
</dbReference>
<dbReference type="Gene3D" id="3.10.25.10">
    <property type="entry name" value="Formyl transferase, C-terminal domain"/>
    <property type="match status" value="1"/>
</dbReference>
<dbReference type="Gene3D" id="3.40.50.170">
    <property type="entry name" value="Formyl transferase, N-terminal domain"/>
    <property type="match status" value="1"/>
</dbReference>
<dbReference type="HAMAP" id="MF_00182">
    <property type="entry name" value="Formyl_trans"/>
    <property type="match status" value="1"/>
</dbReference>
<dbReference type="InterPro" id="IPR005794">
    <property type="entry name" value="Fmt"/>
</dbReference>
<dbReference type="InterPro" id="IPR005793">
    <property type="entry name" value="Formyl_trans_C"/>
</dbReference>
<dbReference type="InterPro" id="IPR037022">
    <property type="entry name" value="Formyl_trans_C_sf"/>
</dbReference>
<dbReference type="InterPro" id="IPR002376">
    <property type="entry name" value="Formyl_transf_N"/>
</dbReference>
<dbReference type="InterPro" id="IPR036477">
    <property type="entry name" value="Formyl_transf_N_sf"/>
</dbReference>
<dbReference type="InterPro" id="IPR011034">
    <property type="entry name" value="Formyl_transferase-like_C_sf"/>
</dbReference>
<dbReference type="InterPro" id="IPR001555">
    <property type="entry name" value="GART_AS"/>
</dbReference>
<dbReference type="InterPro" id="IPR044135">
    <property type="entry name" value="Met-tRNA-FMT_C"/>
</dbReference>
<dbReference type="InterPro" id="IPR041711">
    <property type="entry name" value="Met-tRNA-FMT_N"/>
</dbReference>
<dbReference type="NCBIfam" id="TIGR00460">
    <property type="entry name" value="fmt"/>
    <property type="match status" value="1"/>
</dbReference>
<dbReference type="PANTHER" id="PTHR11138">
    <property type="entry name" value="METHIONYL-TRNA FORMYLTRANSFERASE"/>
    <property type="match status" value="1"/>
</dbReference>
<dbReference type="PANTHER" id="PTHR11138:SF5">
    <property type="entry name" value="METHIONYL-TRNA FORMYLTRANSFERASE, MITOCHONDRIAL"/>
    <property type="match status" value="1"/>
</dbReference>
<dbReference type="Pfam" id="PF02911">
    <property type="entry name" value="Formyl_trans_C"/>
    <property type="match status" value="1"/>
</dbReference>
<dbReference type="Pfam" id="PF00551">
    <property type="entry name" value="Formyl_trans_N"/>
    <property type="match status" value="1"/>
</dbReference>
<dbReference type="SUPFAM" id="SSF50486">
    <property type="entry name" value="FMT C-terminal domain-like"/>
    <property type="match status" value="1"/>
</dbReference>
<dbReference type="SUPFAM" id="SSF53328">
    <property type="entry name" value="Formyltransferase"/>
    <property type="match status" value="1"/>
</dbReference>
<dbReference type="PROSITE" id="PS00373">
    <property type="entry name" value="GART"/>
    <property type="match status" value="1"/>
</dbReference>
<protein>
    <recommendedName>
        <fullName evidence="1">Methionyl-tRNA formyltransferase</fullName>
        <ecNumber evidence="1">2.1.2.9</ecNumber>
    </recommendedName>
</protein>
<sequence length="315" mass="34342">MSKPLRIIFAGTPDFAARHLSALIDSHHEVIGVYTQPDRPAGRGKKLTASPVKELALEHNIPVFQPENFKSDEAKQELADQNADLMVVVAYGLLLPQAVLDTPKLGCINVHGSILPRWRGAAPIQRSIWAGDAETGVTIMQMDIGLDTGDMLKIATLPIEATDTSASMYDKLAELGPVALVDCLSDIADGSAIAQKQDDELANYAKKLSKEEAKIDWTMDAIAIERCVRAFNPWPMSHFSVEDKAIKVWQSRVESYTGDATPGTIIQADKTGIYVATGSDAIVFEQLQVPGKKAMGVQDILNSRKEWFEVGNTLN</sequence>
<comment type="function">
    <text evidence="1">Attaches a formyl group to the free amino group of methionyl-tRNA(fMet). The formyl group appears to play a dual role in the initiator identity of N-formylmethionyl-tRNA by promoting its recognition by IF2 and preventing the misappropriation of this tRNA by the elongation apparatus.</text>
</comment>
<comment type="catalytic activity">
    <reaction evidence="1">
        <text>L-methionyl-tRNA(fMet) + (6R)-10-formyltetrahydrofolate = N-formyl-L-methionyl-tRNA(fMet) + (6S)-5,6,7,8-tetrahydrofolate + H(+)</text>
        <dbReference type="Rhea" id="RHEA:24380"/>
        <dbReference type="Rhea" id="RHEA-COMP:9952"/>
        <dbReference type="Rhea" id="RHEA-COMP:9953"/>
        <dbReference type="ChEBI" id="CHEBI:15378"/>
        <dbReference type="ChEBI" id="CHEBI:57453"/>
        <dbReference type="ChEBI" id="CHEBI:78530"/>
        <dbReference type="ChEBI" id="CHEBI:78844"/>
        <dbReference type="ChEBI" id="CHEBI:195366"/>
        <dbReference type="EC" id="2.1.2.9"/>
    </reaction>
</comment>
<comment type="similarity">
    <text evidence="1">Belongs to the Fmt family.</text>
</comment>
<organism>
    <name type="scientific">Aliivibrio fischeri (strain MJ11)</name>
    <name type="common">Vibrio fischeri</name>
    <dbReference type="NCBI Taxonomy" id="388396"/>
    <lineage>
        <taxon>Bacteria</taxon>
        <taxon>Pseudomonadati</taxon>
        <taxon>Pseudomonadota</taxon>
        <taxon>Gammaproteobacteria</taxon>
        <taxon>Vibrionales</taxon>
        <taxon>Vibrionaceae</taxon>
        <taxon>Aliivibrio</taxon>
    </lineage>
</organism>
<name>FMT_ALIFM</name>